<keyword id="KW-0413">Isomerase</keyword>
<keyword id="KW-1185">Reference proteome</keyword>
<accession>Q81JS3</accession>
<accession>Q6HQC3</accession>
<accession>Q6KIV5</accession>
<proteinExistence type="inferred from homology"/>
<sequence>MPYVTVKMLEGRTEEQKKALAEKVTAAVSETTGAPEENIVVFIEEMSKNHYAVGGKRLSDK</sequence>
<name>Y5626_BACAN</name>
<gene>
    <name type="ordered locus">BA_5626</name>
    <name type="ordered locus">GBAA_5626</name>
    <name type="ordered locus">BAS5226</name>
</gene>
<protein>
    <recommendedName>
        <fullName>Probable tautomerase BA_5626/GBAA_5626/BAS5226</fullName>
        <ecNumber>5.3.2.-</ecNumber>
    </recommendedName>
</protein>
<feature type="initiator methionine" description="Removed" evidence="1">
    <location>
        <position position="1"/>
    </location>
</feature>
<feature type="chain" id="PRO_0000209519" description="Probable tautomerase BA_5626/GBAA_5626/BAS5226">
    <location>
        <begin position="2"/>
        <end position="61"/>
    </location>
</feature>
<feature type="active site" description="Proton acceptor; via imino nitrogen" evidence="1">
    <location>
        <position position="2"/>
    </location>
</feature>
<comment type="similarity">
    <text evidence="2">Belongs to the 4-oxalocrotonate tautomerase family.</text>
</comment>
<evidence type="ECO:0000250" key="1"/>
<evidence type="ECO:0000305" key="2"/>
<organism>
    <name type="scientific">Bacillus anthracis</name>
    <dbReference type="NCBI Taxonomy" id="1392"/>
    <lineage>
        <taxon>Bacteria</taxon>
        <taxon>Bacillati</taxon>
        <taxon>Bacillota</taxon>
        <taxon>Bacilli</taxon>
        <taxon>Bacillales</taxon>
        <taxon>Bacillaceae</taxon>
        <taxon>Bacillus</taxon>
        <taxon>Bacillus cereus group</taxon>
    </lineage>
</organism>
<reference key="1">
    <citation type="journal article" date="2003" name="Nature">
        <title>The genome sequence of Bacillus anthracis Ames and comparison to closely related bacteria.</title>
        <authorList>
            <person name="Read T.D."/>
            <person name="Peterson S.N."/>
            <person name="Tourasse N.J."/>
            <person name="Baillie L.W."/>
            <person name="Paulsen I.T."/>
            <person name="Nelson K.E."/>
            <person name="Tettelin H."/>
            <person name="Fouts D.E."/>
            <person name="Eisen J.A."/>
            <person name="Gill S.R."/>
            <person name="Holtzapple E.K."/>
            <person name="Okstad O.A."/>
            <person name="Helgason E."/>
            <person name="Rilstone J."/>
            <person name="Wu M."/>
            <person name="Kolonay J.F."/>
            <person name="Beanan M.J."/>
            <person name="Dodson R.J."/>
            <person name="Brinkac L.M."/>
            <person name="Gwinn M.L."/>
            <person name="DeBoy R.T."/>
            <person name="Madpu R."/>
            <person name="Daugherty S.C."/>
            <person name="Durkin A.S."/>
            <person name="Haft D.H."/>
            <person name="Nelson W.C."/>
            <person name="Peterson J.D."/>
            <person name="Pop M."/>
            <person name="Khouri H.M."/>
            <person name="Radune D."/>
            <person name="Benton J.L."/>
            <person name="Mahamoud Y."/>
            <person name="Jiang L."/>
            <person name="Hance I.R."/>
            <person name="Weidman J.F."/>
            <person name="Berry K.J."/>
            <person name="Plaut R.D."/>
            <person name="Wolf A.M."/>
            <person name="Watkins K.L."/>
            <person name="Nierman W.C."/>
            <person name="Hazen A."/>
            <person name="Cline R.T."/>
            <person name="Redmond C."/>
            <person name="Thwaite J.E."/>
            <person name="White O."/>
            <person name="Salzberg S.L."/>
            <person name="Thomason B."/>
            <person name="Friedlander A.M."/>
            <person name="Koehler T.M."/>
            <person name="Hanna P.C."/>
            <person name="Kolstoe A.-B."/>
            <person name="Fraser C.M."/>
        </authorList>
    </citation>
    <scope>NUCLEOTIDE SEQUENCE [LARGE SCALE GENOMIC DNA]</scope>
    <source>
        <strain>Ames / isolate Porton</strain>
    </source>
</reference>
<reference key="2">
    <citation type="journal article" date="2009" name="J. Bacteriol.">
        <title>The complete genome sequence of Bacillus anthracis Ames 'Ancestor'.</title>
        <authorList>
            <person name="Ravel J."/>
            <person name="Jiang L."/>
            <person name="Stanley S.T."/>
            <person name="Wilson M.R."/>
            <person name="Decker R.S."/>
            <person name="Read T.D."/>
            <person name="Worsham P."/>
            <person name="Keim P.S."/>
            <person name="Salzberg S.L."/>
            <person name="Fraser-Liggett C.M."/>
            <person name="Rasko D.A."/>
        </authorList>
    </citation>
    <scope>NUCLEOTIDE SEQUENCE [LARGE SCALE GENOMIC DNA]</scope>
    <source>
        <strain>Ames ancestor</strain>
    </source>
</reference>
<reference key="3">
    <citation type="submission" date="2004-01" db="EMBL/GenBank/DDBJ databases">
        <title>Complete genome sequence of Bacillus anthracis Sterne.</title>
        <authorList>
            <person name="Brettin T.S."/>
            <person name="Bruce D."/>
            <person name="Challacombe J.F."/>
            <person name="Gilna P."/>
            <person name="Han C."/>
            <person name="Hill K."/>
            <person name="Hitchcock P."/>
            <person name="Jackson P."/>
            <person name="Keim P."/>
            <person name="Longmire J."/>
            <person name="Lucas S."/>
            <person name="Okinaka R."/>
            <person name="Richardson P."/>
            <person name="Rubin E."/>
            <person name="Tice H."/>
        </authorList>
    </citation>
    <scope>NUCLEOTIDE SEQUENCE [LARGE SCALE GENOMIC DNA]</scope>
    <source>
        <strain>Sterne</strain>
    </source>
</reference>
<dbReference type="EC" id="5.3.2.-"/>
<dbReference type="EMBL" id="AE016879">
    <property type="protein sequence ID" value="AAP29263.1"/>
    <property type="molecule type" value="Genomic_DNA"/>
</dbReference>
<dbReference type="EMBL" id="AE017334">
    <property type="protein sequence ID" value="AAT35466.1"/>
    <property type="molecule type" value="Genomic_DNA"/>
</dbReference>
<dbReference type="EMBL" id="AE017225">
    <property type="protein sequence ID" value="AAT57515.1"/>
    <property type="molecule type" value="Genomic_DNA"/>
</dbReference>
<dbReference type="RefSeq" id="NP_847777.1">
    <property type="nucleotide sequence ID" value="NC_003997.3"/>
</dbReference>
<dbReference type="RefSeq" id="WP_001147171.1">
    <property type="nucleotide sequence ID" value="NZ_WXXJ01000017.1"/>
</dbReference>
<dbReference type="RefSeq" id="YP_031465.1">
    <property type="nucleotide sequence ID" value="NC_005945.1"/>
</dbReference>
<dbReference type="SMR" id="Q81JS3"/>
<dbReference type="STRING" id="261594.GBAA_5626"/>
<dbReference type="DNASU" id="1085337"/>
<dbReference type="KEGG" id="ban:BA_5626"/>
<dbReference type="KEGG" id="bar:GBAA_5626"/>
<dbReference type="KEGG" id="bat:BAS5226"/>
<dbReference type="PATRIC" id="fig|198094.11.peg.5584"/>
<dbReference type="eggNOG" id="COG1942">
    <property type="taxonomic scope" value="Bacteria"/>
</dbReference>
<dbReference type="HOGENOM" id="CLU_148073_5_1_9"/>
<dbReference type="OMA" id="MPIVQVE"/>
<dbReference type="OrthoDB" id="5405937at2"/>
<dbReference type="Proteomes" id="UP000000427">
    <property type="component" value="Chromosome"/>
</dbReference>
<dbReference type="Proteomes" id="UP000000594">
    <property type="component" value="Chromosome"/>
</dbReference>
<dbReference type="GO" id="GO:0016853">
    <property type="term" value="F:isomerase activity"/>
    <property type="evidence" value="ECO:0007669"/>
    <property type="project" value="UniProtKB-KW"/>
</dbReference>
<dbReference type="CDD" id="cd00491">
    <property type="entry name" value="4Oxalocrotonate_Tautomerase"/>
    <property type="match status" value="1"/>
</dbReference>
<dbReference type="Gene3D" id="3.30.429.10">
    <property type="entry name" value="Macrophage Migration Inhibitory Factor"/>
    <property type="match status" value="1"/>
</dbReference>
<dbReference type="InterPro" id="IPR018191">
    <property type="entry name" value="4-OT"/>
</dbReference>
<dbReference type="InterPro" id="IPR004370">
    <property type="entry name" value="4-OT-like_dom"/>
</dbReference>
<dbReference type="InterPro" id="IPR014347">
    <property type="entry name" value="Tautomerase/MIF_sf"/>
</dbReference>
<dbReference type="NCBIfam" id="NF002571">
    <property type="entry name" value="PRK02220.1"/>
    <property type="match status" value="1"/>
</dbReference>
<dbReference type="NCBIfam" id="TIGR00013">
    <property type="entry name" value="taut"/>
    <property type="match status" value="1"/>
</dbReference>
<dbReference type="PANTHER" id="PTHR35530:SF1">
    <property type="entry name" value="2-HYDROXYMUCONATE TAUTOMERASE"/>
    <property type="match status" value="1"/>
</dbReference>
<dbReference type="PANTHER" id="PTHR35530">
    <property type="entry name" value="TAUTOMERASE-RELATED"/>
    <property type="match status" value="1"/>
</dbReference>
<dbReference type="Pfam" id="PF01361">
    <property type="entry name" value="Tautomerase"/>
    <property type="match status" value="1"/>
</dbReference>
<dbReference type="SUPFAM" id="SSF55331">
    <property type="entry name" value="Tautomerase/MIF"/>
    <property type="match status" value="1"/>
</dbReference>